<evidence type="ECO:0000250" key="1"/>
<evidence type="ECO:0000255" key="2"/>
<evidence type="ECO:0000269" key="3">
    <source>
    </source>
</evidence>
<evidence type="ECO:0000269" key="4">
    <source>
    </source>
</evidence>
<evidence type="ECO:0000269" key="5">
    <source>
    </source>
</evidence>
<evidence type="ECO:0000305" key="6"/>
<evidence type="ECO:0000305" key="7">
    <source>
    </source>
</evidence>
<evidence type="ECO:0007744" key="8">
    <source>
    </source>
</evidence>
<feature type="transit peptide" description="Chloroplast" evidence="2 8">
    <location>
        <begin position="1"/>
        <end position="55"/>
    </location>
</feature>
<feature type="chain" id="PRO_0000418770" description="Magnesium-chelatase subunit ChlI-2, chloroplastic">
    <location>
        <begin position="56"/>
        <end position="418"/>
    </location>
</feature>
<feature type="binding site" evidence="2">
    <location>
        <begin position="113"/>
        <end position="120"/>
    </location>
    <ligand>
        <name>ATP</name>
        <dbReference type="ChEBI" id="CHEBI:30616"/>
    </ligand>
</feature>
<feature type="modified residue" description="N-acetylvaline" evidence="8">
    <location>
        <position position="56"/>
    </location>
</feature>
<feature type="disulfide bond" evidence="1">
    <location>
        <begin position="96"/>
        <end position="187"/>
    </location>
</feature>
<feature type="disulfide bond" description="Inhibitory under oxidizing conditions" evidence="1">
    <location>
        <begin position="348"/>
        <end position="390"/>
    </location>
</feature>
<feature type="sequence conflict" description="In Ref. 3; AAM98163." evidence="6" ref="3">
    <original>A</original>
    <variation>T</variation>
    <location>
        <position position="371"/>
    </location>
</feature>
<organism>
    <name type="scientific">Arabidopsis thaliana</name>
    <name type="common">Mouse-ear cress</name>
    <dbReference type="NCBI Taxonomy" id="3702"/>
    <lineage>
        <taxon>Eukaryota</taxon>
        <taxon>Viridiplantae</taxon>
        <taxon>Streptophyta</taxon>
        <taxon>Embryophyta</taxon>
        <taxon>Tracheophyta</taxon>
        <taxon>Spermatophyta</taxon>
        <taxon>Magnoliopsida</taxon>
        <taxon>eudicotyledons</taxon>
        <taxon>Gunneridae</taxon>
        <taxon>Pentapetalae</taxon>
        <taxon>rosids</taxon>
        <taxon>malvids</taxon>
        <taxon>Brassicales</taxon>
        <taxon>Brassicaceae</taxon>
        <taxon>Camelineae</taxon>
        <taxon>Arabidopsis</taxon>
    </lineage>
</organism>
<keyword id="KW-0007">Acetylation</keyword>
<keyword id="KW-0067">ATP-binding</keyword>
<keyword id="KW-0149">Chlorophyll biosynthesis</keyword>
<keyword id="KW-0150">Chloroplast</keyword>
<keyword id="KW-1015">Disulfide bond</keyword>
<keyword id="KW-0436">Ligase</keyword>
<keyword id="KW-0547">Nucleotide-binding</keyword>
<keyword id="KW-0602">Photosynthesis</keyword>
<keyword id="KW-0934">Plastid</keyword>
<keyword id="KW-1185">Reference proteome</keyword>
<keyword id="KW-0809">Transit peptide</keyword>
<comment type="function">
    <text evidence="4 5">Involved in chlorophyll biosynthesis. Catalyzes the insertion of magnesium ion into protoporphyrin IX to yield Mg-protoporphyrin IX. The reaction takes place in two steps, with an ATP-dependent activation followed by an ATP-dependent chelation step. Possesses low affinity for ATP and may play a limited role in chlorophyll biosynthesis, and contributes to the assembly of the Mg-chelatase complex.</text>
</comment>
<comment type="catalytic activity">
    <reaction>
        <text>protoporphyrin IX + Mg(2+) + ATP + H2O = Mg-protoporphyrin IX + ADP + phosphate + 3 H(+)</text>
        <dbReference type="Rhea" id="RHEA:13961"/>
        <dbReference type="ChEBI" id="CHEBI:15377"/>
        <dbReference type="ChEBI" id="CHEBI:15378"/>
        <dbReference type="ChEBI" id="CHEBI:18420"/>
        <dbReference type="ChEBI" id="CHEBI:30616"/>
        <dbReference type="ChEBI" id="CHEBI:43474"/>
        <dbReference type="ChEBI" id="CHEBI:57306"/>
        <dbReference type="ChEBI" id="CHEBI:60492"/>
        <dbReference type="ChEBI" id="CHEBI:456216"/>
        <dbReference type="EC" id="6.6.1.1"/>
    </reaction>
</comment>
<comment type="activity regulation">
    <text evidence="4">Redox regulation; active in reducing conditions, inactive in oxidizing conditions. Thioredoxins f and m mediate the reversible reductive activation of oxidized CHLI2.</text>
</comment>
<comment type="biophysicochemical properties">
    <kinetics>
        <KM evidence="4">1.29 mM for ATP</KM>
        <Vmax evidence="4">27.8 nmol/min/mg enzyme toward ATP</Vmax>
    </kinetics>
</comment>
<comment type="pathway">
    <text>Porphyrin-containing compound metabolism; chlorophyll biosynthesis.</text>
</comment>
<comment type="subunit">
    <text evidence="4">The magnesium chelatase complex is a heterotrimer consisting of subunits CHLI, CHLD and CHLH.</text>
</comment>
<comment type="subcellular location">
    <subcellularLocation>
        <location evidence="7">Plastid</location>
        <location evidence="7">Chloroplast</location>
    </subcellularLocation>
</comment>
<comment type="tissue specificity">
    <text evidence="3">Expressed in leaves.</text>
</comment>
<comment type="disruption phenotype">
    <text evidence="4 5">No visible phenotype under normal growth conditions, but plants show slight decrease in chlorophyll content. Chli1 and chli2 double mutants are albino.</text>
</comment>
<comment type="similarity">
    <text evidence="6">Belongs to the Mg-chelatase subunits D/I family.</text>
</comment>
<comment type="sequence caution" evidence="6">
    <conflict type="erroneous gene model prediction">
        <sequence resource="EMBL-CDS" id="BAB09321"/>
    </conflict>
</comment>
<accession>Q5XF33</accession>
<accession>Q8L712</accession>
<accession>Q9FJ43</accession>
<sequence>MASLLGRSPSSILTCPRISSPSSTSSMSHLCFGPEKLSGRIQFNPKKNRSRYHVSVMNVATEINSVEQAKKIDSKESARPVYPFAAIVGQDEMKLCLLLNVIDPKIGGVMIMGDRGTGKSTTVRSLVDLLPEITVVSGDPYNSDPRDPECMGKEVREKVQKGEELSVIETKINMVDLPLGATEDRVCGTIDIEKALTEGVKAFEPGLLAKANRGILYVDEVNLLDDHLVDVLLDSAASGWNTVEREGISISHPARFILIGSGNPEEGELRPQLLDRFGMHAQVGTVRDAELRVKIVEERARFDSNPKEFRETYQEEQLKLQEQITTARSNLSAVQIDQDLKVKISKVCAELDVDGLRGDMVINRAARALAALQGRDQVTAEDVGIVIPNCLRHRLRKDPLESMDSGILVTEKFYEVFT</sequence>
<reference key="1">
    <citation type="journal article" date="1998" name="DNA Res.">
        <title>Structural analysis of Arabidopsis thaliana chromosome 5. VIII. Sequence features of the regions of 1,081,958 bp covered by seventeen physically assigned P1 and TAC clones.</title>
        <authorList>
            <person name="Asamizu E."/>
            <person name="Sato S."/>
            <person name="Kaneko T."/>
            <person name="Nakamura Y."/>
            <person name="Kotani H."/>
            <person name="Miyajima N."/>
            <person name="Tabata S."/>
        </authorList>
    </citation>
    <scope>NUCLEOTIDE SEQUENCE [LARGE SCALE GENOMIC DNA]</scope>
    <source>
        <strain>cv. Columbia</strain>
    </source>
</reference>
<reference key="2">
    <citation type="journal article" date="2017" name="Plant J.">
        <title>Araport11: a complete reannotation of the Arabidopsis thaliana reference genome.</title>
        <authorList>
            <person name="Cheng C.Y."/>
            <person name="Krishnakumar V."/>
            <person name="Chan A.P."/>
            <person name="Thibaud-Nissen F."/>
            <person name="Schobel S."/>
            <person name="Town C.D."/>
        </authorList>
    </citation>
    <scope>GENOME REANNOTATION</scope>
    <source>
        <strain>cv. Columbia</strain>
    </source>
</reference>
<reference key="3">
    <citation type="journal article" date="2003" name="Science">
        <title>Empirical analysis of transcriptional activity in the Arabidopsis genome.</title>
        <authorList>
            <person name="Yamada K."/>
            <person name="Lim J."/>
            <person name="Dale J.M."/>
            <person name="Chen H."/>
            <person name="Shinn P."/>
            <person name="Palm C.J."/>
            <person name="Southwick A.M."/>
            <person name="Wu H.C."/>
            <person name="Kim C.J."/>
            <person name="Nguyen M."/>
            <person name="Pham P.K."/>
            <person name="Cheuk R.F."/>
            <person name="Karlin-Newmann G."/>
            <person name="Liu S.X."/>
            <person name="Lam B."/>
            <person name="Sakano H."/>
            <person name="Wu T."/>
            <person name="Yu G."/>
            <person name="Miranda M."/>
            <person name="Quach H.L."/>
            <person name="Tripp M."/>
            <person name="Chang C.H."/>
            <person name="Lee J.M."/>
            <person name="Toriumi M.J."/>
            <person name="Chan M.M."/>
            <person name="Tang C.C."/>
            <person name="Onodera C.S."/>
            <person name="Deng J.M."/>
            <person name="Akiyama K."/>
            <person name="Ansari Y."/>
            <person name="Arakawa T."/>
            <person name="Banh J."/>
            <person name="Banno F."/>
            <person name="Bowser L."/>
            <person name="Brooks S.Y."/>
            <person name="Carninci P."/>
            <person name="Chao Q."/>
            <person name="Choy N."/>
            <person name="Enju A."/>
            <person name="Goldsmith A.D."/>
            <person name="Gurjal M."/>
            <person name="Hansen N.F."/>
            <person name="Hayashizaki Y."/>
            <person name="Johnson-Hopson C."/>
            <person name="Hsuan V.W."/>
            <person name="Iida K."/>
            <person name="Karnes M."/>
            <person name="Khan S."/>
            <person name="Koesema E."/>
            <person name="Ishida J."/>
            <person name="Jiang P.X."/>
            <person name="Jones T."/>
            <person name="Kawai J."/>
            <person name="Kamiya A."/>
            <person name="Meyers C."/>
            <person name="Nakajima M."/>
            <person name="Narusaka M."/>
            <person name="Seki M."/>
            <person name="Sakurai T."/>
            <person name="Satou M."/>
            <person name="Tamse R."/>
            <person name="Vaysberg M."/>
            <person name="Wallender E.K."/>
            <person name="Wong C."/>
            <person name="Yamamura Y."/>
            <person name="Yuan S."/>
            <person name="Shinozaki K."/>
            <person name="Davis R.W."/>
            <person name="Theologis A."/>
            <person name="Ecker J.R."/>
        </authorList>
    </citation>
    <scope>NUCLEOTIDE SEQUENCE [LARGE SCALE MRNA]</scope>
    <source>
        <strain>cv. Columbia</strain>
    </source>
</reference>
<reference key="4">
    <citation type="submission" date="2004-10" db="EMBL/GenBank/DDBJ databases">
        <title>Arabidopsis ORF clones.</title>
        <authorList>
            <person name="Shinn P."/>
            <person name="Chen H."/>
            <person name="Cheuk R.F."/>
            <person name="Kim C.J."/>
            <person name="Ecker J.R."/>
        </authorList>
    </citation>
    <scope>NUCLEOTIDE SEQUENCE [LARGE SCALE MRNA]</scope>
    <source>
        <strain>cv. Columbia</strain>
    </source>
</reference>
<reference key="5">
    <citation type="journal article" date="2002" name="Plant Physiol.">
        <title>Chlorophyll biosynthesis. Expression of a second chl I gene of magnesium chelatase in Arabidopsis supports only limited chlorophyll synthesis.</title>
        <authorList>
            <person name="Rissler H.M."/>
            <person name="Collakova E."/>
            <person name="DellaPenna D."/>
            <person name="Whelan J."/>
            <person name="Pogson B.J."/>
        </authorList>
    </citation>
    <scope>TISSUE SPECIFICITY</scope>
</reference>
<reference key="6">
    <citation type="journal article" date="2008" name="Photochem. Photobiol. Sci.">
        <title>Functional analysis of Arabidopsis thaliana isoforms of the Mg-chelatase CHLI subunit.</title>
        <authorList>
            <person name="Kobayashi K."/>
            <person name="Mochizuki N."/>
            <person name="Yoshimura N."/>
            <person name="Motohashi K."/>
            <person name="Hisabori T."/>
            <person name="Masuda T."/>
        </authorList>
    </citation>
    <scope>FUNCTION</scope>
    <scope>SUBCELLULAR LOCATION</scope>
    <scope>SUBUNIT</scope>
    <scope>ACTIVITY REGULATION</scope>
    <scope>BIOPHYSICOCHEMICAL PROPERTIES</scope>
    <scope>DISRUPTION PHENOTYPE</scope>
</reference>
<reference key="7">
    <citation type="journal article" date="2009" name="Plant Physiol.">
        <title>Arabidopsis CHLI2 can substitute for CHLI1.</title>
        <authorList>
            <person name="Huang Y.S."/>
            <person name="Li H.M."/>
        </authorList>
    </citation>
    <scope>FUNCTION</scope>
    <scope>DISRUPTION PHENOTYPE</scope>
</reference>
<reference key="8">
    <citation type="journal article" date="2012" name="Mol. Cell. Proteomics">
        <title>Comparative large-scale characterisation of plant vs. mammal proteins reveals similar and idiosyncratic N-alpha acetylation features.</title>
        <authorList>
            <person name="Bienvenut W.V."/>
            <person name="Sumpton D."/>
            <person name="Martinez A."/>
            <person name="Lilla S."/>
            <person name="Espagne C."/>
            <person name="Meinnel T."/>
            <person name="Giglione C."/>
        </authorList>
    </citation>
    <scope>ACETYLATION [LARGE SCALE ANALYSIS] AT VAL-56</scope>
    <scope>CLEAVAGE OF TRANSIT PEPTIDE [LARGE SCALE ANALYSIS] AFTER SER-55</scope>
    <scope>IDENTIFICATION BY MASS SPECTROMETRY [LARGE SCALE ANALYSIS]</scope>
</reference>
<gene>
    <name type="primary">CHLI2</name>
    <name type="ordered locus">At5g45930</name>
    <name type="ORF">K15I22.13</name>
</gene>
<name>CHLI2_ARATH</name>
<dbReference type="EC" id="6.6.1.1"/>
<dbReference type="EMBL" id="AB016870">
    <property type="protein sequence ID" value="BAB09321.1"/>
    <property type="status" value="ALT_SEQ"/>
    <property type="molecule type" value="Genomic_DNA"/>
</dbReference>
<dbReference type="EMBL" id="CP002688">
    <property type="protein sequence ID" value="AED95316.1"/>
    <property type="molecule type" value="Genomic_DNA"/>
</dbReference>
<dbReference type="EMBL" id="AY140022">
    <property type="protein sequence ID" value="AAM98163.1"/>
    <property type="molecule type" value="mRNA"/>
</dbReference>
<dbReference type="EMBL" id="BT015783">
    <property type="protein sequence ID" value="AAU90073.1"/>
    <property type="molecule type" value="mRNA"/>
</dbReference>
<dbReference type="RefSeq" id="NP_199405.2">
    <property type="nucleotide sequence ID" value="NM_123961.4"/>
</dbReference>
<dbReference type="SMR" id="Q5XF33"/>
<dbReference type="FunCoup" id="Q5XF33">
    <property type="interactions" value="628"/>
</dbReference>
<dbReference type="STRING" id="3702.Q5XF33"/>
<dbReference type="iPTMnet" id="Q5XF33"/>
<dbReference type="PaxDb" id="3702-AT5G45930.1"/>
<dbReference type="ProteomicsDB" id="245180"/>
<dbReference type="EnsemblPlants" id="AT5G45930.1">
    <property type="protein sequence ID" value="AT5G45930.1"/>
    <property type="gene ID" value="AT5G45930"/>
</dbReference>
<dbReference type="GeneID" id="834633"/>
<dbReference type="Gramene" id="AT5G45930.1">
    <property type="protein sequence ID" value="AT5G45930.1"/>
    <property type="gene ID" value="AT5G45930"/>
</dbReference>
<dbReference type="KEGG" id="ath:AT5G45930"/>
<dbReference type="Araport" id="AT5G45930"/>
<dbReference type="TAIR" id="AT5G45930">
    <property type="gene designation" value="CHLI2"/>
</dbReference>
<dbReference type="eggNOG" id="ENOG502QRUY">
    <property type="taxonomic scope" value="Eukaryota"/>
</dbReference>
<dbReference type="HOGENOM" id="CLU_016684_0_0_1"/>
<dbReference type="InParanoid" id="Q5XF33"/>
<dbReference type="OMA" id="TVMERRF"/>
<dbReference type="OrthoDB" id="34999at2759"/>
<dbReference type="PhylomeDB" id="Q5XF33"/>
<dbReference type="BioCyc" id="ARA:AT5G45930-MONOMER"/>
<dbReference type="SABIO-RK" id="Q5XF33"/>
<dbReference type="UniPathway" id="UPA00668"/>
<dbReference type="PRO" id="PR:Q5XF33"/>
<dbReference type="Proteomes" id="UP000006548">
    <property type="component" value="Chromosome 5"/>
</dbReference>
<dbReference type="ExpressionAtlas" id="Q5XF33">
    <property type="expression patterns" value="baseline and differential"/>
</dbReference>
<dbReference type="GO" id="GO:0009507">
    <property type="term" value="C:chloroplast"/>
    <property type="evidence" value="ECO:0007005"/>
    <property type="project" value="TAIR"/>
</dbReference>
<dbReference type="GO" id="GO:0009570">
    <property type="term" value="C:chloroplast stroma"/>
    <property type="evidence" value="ECO:0000314"/>
    <property type="project" value="TAIR"/>
</dbReference>
<dbReference type="GO" id="GO:0010007">
    <property type="term" value="C:magnesium chelatase complex"/>
    <property type="evidence" value="ECO:0000304"/>
    <property type="project" value="TAIR"/>
</dbReference>
<dbReference type="GO" id="GO:0009536">
    <property type="term" value="C:plastid"/>
    <property type="evidence" value="ECO:0007005"/>
    <property type="project" value="TAIR"/>
</dbReference>
<dbReference type="GO" id="GO:0005524">
    <property type="term" value="F:ATP binding"/>
    <property type="evidence" value="ECO:0007669"/>
    <property type="project" value="UniProtKB-KW"/>
</dbReference>
<dbReference type="GO" id="GO:0016887">
    <property type="term" value="F:ATP hydrolysis activity"/>
    <property type="evidence" value="ECO:0000314"/>
    <property type="project" value="TAIR"/>
</dbReference>
<dbReference type="GO" id="GO:0016851">
    <property type="term" value="F:magnesium chelatase activity"/>
    <property type="evidence" value="ECO:0000250"/>
    <property type="project" value="TAIR"/>
</dbReference>
<dbReference type="GO" id="GO:0015995">
    <property type="term" value="P:chlorophyll biosynthetic process"/>
    <property type="evidence" value="ECO:0000315"/>
    <property type="project" value="TAIR"/>
</dbReference>
<dbReference type="GO" id="GO:0015979">
    <property type="term" value="P:photosynthesis"/>
    <property type="evidence" value="ECO:0007669"/>
    <property type="project" value="UniProtKB-KW"/>
</dbReference>
<dbReference type="CDD" id="cd00009">
    <property type="entry name" value="AAA"/>
    <property type="match status" value="1"/>
</dbReference>
<dbReference type="FunFam" id="1.10.8.80:FF:000001">
    <property type="entry name" value="Mg-protoporphyrin IX chelatase"/>
    <property type="match status" value="1"/>
</dbReference>
<dbReference type="FunFam" id="3.40.50.300:FF:000601">
    <property type="entry name" value="Mg-protoporphyrin IX chelatase"/>
    <property type="match status" value="1"/>
</dbReference>
<dbReference type="Gene3D" id="1.10.8.80">
    <property type="entry name" value="Magnesium chelatase subunit I, C-Terminal domain"/>
    <property type="match status" value="1"/>
</dbReference>
<dbReference type="Gene3D" id="3.40.50.300">
    <property type="entry name" value="P-loop containing nucleotide triphosphate hydrolases"/>
    <property type="match status" value="1"/>
</dbReference>
<dbReference type="InterPro" id="IPR003593">
    <property type="entry name" value="AAA+_ATPase"/>
</dbReference>
<dbReference type="InterPro" id="IPR045006">
    <property type="entry name" value="CHLI-like"/>
</dbReference>
<dbReference type="InterPro" id="IPR041628">
    <property type="entry name" value="ChlI/MoxR_AAA_lid"/>
</dbReference>
<dbReference type="InterPro" id="IPR011775">
    <property type="entry name" value="Mg_chelatase_ATPase-isu"/>
</dbReference>
<dbReference type="InterPro" id="IPR000523">
    <property type="entry name" value="Mg_chelatse_chII-like_cat_dom"/>
</dbReference>
<dbReference type="InterPro" id="IPR027417">
    <property type="entry name" value="P-loop_NTPase"/>
</dbReference>
<dbReference type="NCBIfam" id="TIGR02030">
    <property type="entry name" value="BchI-ChlI"/>
    <property type="match status" value="1"/>
</dbReference>
<dbReference type="PANTHER" id="PTHR32039">
    <property type="entry name" value="MAGNESIUM-CHELATASE SUBUNIT CHLI"/>
    <property type="match status" value="1"/>
</dbReference>
<dbReference type="PANTHER" id="PTHR32039:SF9">
    <property type="entry name" value="MAGNESIUM-CHELATASE SUBUNIT CHLI-2, CHLOROPLASTIC"/>
    <property type="match status" value="1"/>
</dbReference>
<dbReference type="Pfam" id="PF17863">
    <property type="entry name" value="AAA_lid_2"/>
    <property type="match status" value="1"/>
</dbReference>
<dbReference type="Pfam" id="PF01078">
    <property type="entry name" value="Mg_chelatase"/>
    <property type="match status" value="1"/>
</dbReference>
<dbReference type="SMART" id="SM00382">
    <property type="entry name" value="AAA"/>
    <property type="match status" value="1"/>
</dbReference>
<dbReference type="SUPFAM" id="SSF52540">
    <property type="entry name" value="P-loop containing nucleoside triphosphate hydrolases"/>
    <property type="match status" value="1"/>
</dbReference>
<protein>
    <recommendedName>
        <fullName>Magnesium-chelatase subunit ChlI-2, chloroplastic</fullName>
        <shortName>Mg-chelatase subunit I-2</shortName>
        <ecNumber>6.6.1.1</ecNumber>
    </recommendedName>
    <alternativeName>
        <fullName>Mg-protoporphyrin IX chelatase subunit ChlI-2</fullName>
    </alternativeName>
</protein>
<proteinExistence type="evidence at protein level"/>